<reference key="1">
    <citation type="journal article" date="2007" name="ISME J.">
        <title>Population level functional diversity in a microbial community revealed by comparative genomic and metagenomic analyses.</title>
        <authorList>
            <person name="Bhaya D."/>
            <person name="Grossman A.R."/>
            <person name="Steunou A.-S."/>
            <person name="Khuri N."/>
            <person name="Cohan F.M."/>
            <person name="Hamamura N."/>
            <person name="Melendrez M.C."/>
            <person name="Bateson M.M."/>
            <person name="Ward D.M."/>
            <person name="Heidelberg J.F."/>
        </authorList>
    </citation>
    <scope>NUCLEOTIDE SEQUENCE [LARGE SCALE GENOMIC DNA]</scope>
    <source>
        <strain>JA-2-3B'a(2-13)</strain>
    </source>
</reference>
<accession>Q2JKB7</accession>
<feature type="chain" id="PRO_0000242773" description="Octanoyltransferase">
    <location>
        <begin position="1"/>
        <end position="262"/>
    </location>
</feature>
<feature type="domain" description="BPL/LPL catalytic" evidence="2">
    <location>
        <begin position="41"/>
        <end position="232"/>
    </location>
</feature>
<feature type="active site" description="Acyl-thioester intermediate" evidence="1">
    <location>
        <position position="194"/>
    </location>
</feature>
<feature type="binding site" evidence="1">
    <location>
        <begin position="96"/>
        <end position="103"/>
    </location>
    <ligand>
        <name>substrate</name>
    </ligand>
</feature>
<feature type="binding site" evidence="1">
    <location>
        <begin position="163"/>
        <end position="165"/>
    </location>
    <ligand>
        <name>substrate</name>
    </ligand>
</feature>
<feature type="binding site" evidence="1">
    <location>
        <begin position="176"/>
        <end position="178"/>
    </location>
    <ligand>
        <name>substrate</name>
    </ligand>
</feature>
<feature type="site" description="Lowers pKa of active site Cys" evidence="1">
    <location>
        <position position="160"/>
    </location>
</feature>
<proteinExistence type="inferred from homology"/>
<organism>
    <name type="scientific">Synechococcus sp. (strain JA-2-3B'a(2-13))</name>
    <name type="common">Cyanobacteria bacterium Yellowstone B-Prime</name>
    <dbReference type="NCBI Taxonomy" id="321332"/>
    <lineage>
        <taxon>Bacteria</taxon>
        <taxon>Bacillati</taxon>
        <taxon>Cyanobacteriota</taxon>
        <taxon>Cyanophyceae</taxon>
        <taxon>Synechococcales</taxon>
        <taxon>Synechococcaceae</taxon>
        <taxon>Synechococcus</taxon>
    </lineage>
</organism>
<keyword id="KW-0012">Acyltransferase</keyword>
<keyword id="KW-0963">Cytoplasm</keyword>
<keyword id="KW-1185">Reference proteome</keyword>
<keyword id="KW-0808">Transferase</keyword>
<name>LIPB_SYNJB</name>
<evidence type="ECO:0000255" key="1">
    <source>
        <dbReference type="HAMAP-Rule" id="MF_00013"/>
    </source>
</evidence>
<evidence type="ECO:0000255" key="2">
    <source>
        <dbReference type="PROSITE-ProRule" id="PRU01067"/>
    </source>
</evidence>
<protein>
    <recommendedName>
        <fullName evidence="1">Octanoyltransferase</fullName>
        <ecNumber evidence="1">2.3.1.181</ecNumber>
    </recommendedName>
    <alternativeName>
        <fullName evidence="1">Lipoate-protein ligase B</fullName>
    </alternativeName>
    <alternativeName>
        <fullName evidence="1">Lipoyl/octanoyl transferase</fullName>
    </alternativeName>
    <alternativeName>
        <fullName evidence="1">Octanoyl-[acyl-carrier-protein]-protein N-octanoyltransferase</fullName>
    </alternativeName>
</protein>
<comment type="function">
    <text evidence="1">Catalyzes the transfer of endogenously produced octanoic acid from octanoyl-acyl-carrier-protein onto the lipoyl domains of lipoate-dependent enzymes. Lipoyl-ACP can also act as a substrate although octanoyl-ACP is likely to be the physiological substrate.</text>
</comment>
<comment type="catalytic activity">
    <reaction evidence="1">
        <text>octanoyl-[ACP] + L-lysyl-[protein] = N(6)-octanoyl-L-lysyl-[protein] + holo-[ACP] + H(+)</text>
        <dbReference type="Rhea" id="RHEA:17665"/>
        <dbReference type="Rhea" id="RHEA-COMP:9636"/>
        <dbReference type="Rhea" id="RHEA-COMP:9685"/>
        <dbReference type="Rhea" id="RHEA-COMP:9752"/>
        <dbReference type="Rhea" id="RHEA-COMP:9928"/>
        <dbReference type="ChEBI" id="CHEBI:15378"/>
        <dbReference type="ChEBI" id="CHEBI:29969"/>
        <dbReference type="ChEBI" id="CHEBI:64479"/>
        <dbReference type="ChEBI" id="CHEBI:78463"/>
        <dbReference type="ChEBI" id="CHEBI:78809"/>
        <dbReference type="EC" id="2.3.1.181"/>
    </reaction>
</comment>
<comment type="pathway">
    <text evidence="1">Protein modification; protein lipoylation via endogenous pathway; protein N(6)-(lipoyl)lysine from octanoyl-[acyl-carrier-protein]: step 1/2.</text>
</comment>
<comment type="subcellular location">
    <subcellularLocation>
        <location evidence="1">Cytoplasm</location>
    </subcellularLocation>
</comment>
<comment type="miscellaneous">
    <text evidence="1">In the reaction, the free carboxyl group of octanoic acid is attached via an amide linkage to the epsilon-amino group of a specific lysine residue of lipoyl domains of lipoate-dependent enzymes.</text>
</comment>
<comment type="similarity">
    <text evidence="1">Belongs to the LipB family.</text>
</comment>
<sequence>MNFSGSPVQLPLLQVHLPGEVPYRTAWAWQQARLAHMIRDPQLPDGLLLLTHPAVYTLGAGADPKFLKSLSQPIGSPAIHPESPSEQEPEILRVERGGEVTYHGPGQWVGYAMLNLKRHRPDLHEYLRQLEEVVIQTLAHFGLQGERIPGLTGVWVQGRKVAAIGIKVSRWVTYHGFALNVCPDLAAFEAIVPCGIPDRPVGSLVHFCPEVTMAAVAPVLVESFCQVFGLQAQAVSLAEWLGEPRLSDKLLGESTAQTPKRK</sequence>
<gene>
    <name evidence="1" type="primary">lipB</name>
    <name type="ordered locus">CYB_1921</name>
</gene>
<dbReference type="EC" id="2.3.1.181" evidence="1"/>
<dbReference type="EMBL" id="CP000240">
    <property type="protein sequence ID" value="ABD02876.1"/>
    <property type="molecule type" value="Genomic_DNA"/>
</dbReference>
<dbReference type="SMR" id="Q2JKB7"/>
<dbReference type="STRING" id="321332.CYB_1921"/>
<dbReference type="KEGG" id="cyb:CYB_1921"/>
<dbReference type="eggNOG" id="COG0321">
    <property type="taxonomic scope" value="Bacteria"/>
</dbReference>
<dbReference type="HOGENOM" id="CLU_035168_1_0_3"/>
<dbReference type="OrthoDB" id="9787061at2"/>
<dbReference type="UniPathway" id="UPA00538">
    <property type="reaction ID" value="UER00592"/>
</dbReference>
<dbReference type="Proteomes" id="UP000001938">
    <property type="component" value="Chromosome"/>
</dbReference>
<dbReference type="GO" id="GO:0005737">
    <property type="term" value="C:cytoplasm"/>
    <property type="evidence" value="ECO:0007669"/>
    <property type="project" value="UniProtKB-SubCell"/>
</dbReference>
<dbReference type="GO" id="GO:0033819">
    <property type="term" value="F:lipoyl(octanoyl) transferase activity"/>
    <property type="evidence" value="ECO:0007669"/>
    <property type="project" value="UniProtKB-EC"/>
</dbReference>
<dbReference type="GO" id="GO:0036211">
    <property type="term" value="P:protein modification process"/>
    <property type="evidence" value="ECO:0007669"/>
    <property type="project" value="InterPro"/>
</dbReference>
<dbReference type="CDD" id="cd16444">
    <property type="entry name" value="LipB"/>
    <property type="match status" value="1"/>
</dbReference>
<dbReference type="Gene3D" id="3.30.930.10">
    <property type="entry name" value="Bira Bifunctional Protein, Domain 2"/>
    <property type="match status" value="1"/>
</dbReference>
<dbReference type="HAMAP" id="MF_00013">
    <property type="entry name" value="LipB"/>
    <property type="match status" value="1"/>
</dbReference>
<dbReference type="InterPro" id="IPR045864">
    <property type="entry name" value="aa-tRNA-synth_II/BPL/LPL"/>
</dbReference>
<dbReference type="InterPro" id="IPR004143">
    <property type="entry name" value="BPL_LPL_catalytic"/>
</dbReference>
<dbReference type="InterPro" id="IPR000544">
    <property type="entry name" value="Octanoyltransferase"/>
</dbReference>
<dbReference type="InterPro" id="IPR020605">
    <property type="entry name" value="Octanoyltransferase_CS"/>
</dbReference>
<dbReference type="NCBIfam" id="TIGR00214">
    <property type="entry name" value="lipB"/>
    <property type="match status" value="1"/>
</dbReference>
<dbReference type="NCBIfam" id="NF010925">
    <property type="entry name" value="PRK14345.1"/>
    <property type="match status" value="1"/>
</dbReference>
<dbReference type="PANTHER" id="PTHR10993:SF7">
    <property type="entry name" value="LIPOYLTRANSFERASE 2, MITOCHONDRIAL-RELATED"/>
    <property type="match status" value="1"/>
</dbReference>
<dbReference type="PANTHER" id="PTHR10993">
    <property type="entry name" value="OCTANOYLTRANSFERASE"/>
    <property type="match status" value="1"/>
</dbReference>
<dbReference type="Pfam" id="PF21948">
    <property type="entry name" value="LplA-B_cat"/>
    <property type="match status" value="1"/>
</dbReference>
<dbReference type="PIRSF" id="PIRSF016262">
    <property type="entry name" value="LPLase"/>
    <property type="match status" value="1"/>
</dbReference>
<dbReference type="SUPFAM" id="SSF55681">
    <property type="entry name" value="Class II aaRS and biotin synthetases"/>
    <property type="match status" value="1"/>
</dbReference>
<dbReference type="PROSITE" id="PS51733">
    <property type="entry name" value="BPL_LPL_CATALYTIC"/>
    <property type="match status" value="1"/>
</dbReference>
<dbReference type="PROSITE" id="PS01313">
    <property type="entry name" value="LIPB"/>
    <property type="match status" value="1"/>
</dbReference>